<organism>
    <name type="scientific">Oenococcus oeni</name>
    <name type="common">Leuconostoc oenos</name>
    <dbReference type="NCBI Taxonomy" id="1247"/>
    <lineage>
        <taxon>Bacteria</taxon>
        <taxon>Bacillati</taxon>
        <taxon>Bacillota</taxon>
        <taxon>Bacilli</taxon>
        <taxon>Lactobacillales</taxon>
        <taxon>Lactobacillaceae</taxon>
        <taxon>Oenococcus</taxon>
    </lineage>
</organism>
<evidence type="ECO:0000255" key="1">
    <source>
        <dbReference type="HAMAP-Rule" id="MF_01322"/>
    </source>
</evidence>
<evidence type="ECO:0000305" key="2"/>
<name>RPOC_OENOE</name>
<proteinExistence type="inferred from homology"/>
<reference key="1">
    <citation type="journal article" date="1996" name="Int. J. Syst. Bacteriol.">
        <title>Analysis of the beta' subunit of DNA-dependent RNA polymerase does not support the hypothesis inferred from 16S rRNA analysis that Oenococcus oeni (formerly Leuconostoc oenos) is a tachytelic (fast-evolving) bacterium.</title>
        <authorList>
            <person name="Morse R."/>
            <person name="Collins M.D."/>
            <person name="O'Hanlon K."/>
            <person name="Wallbanks S."/>
            <person name="Richardson P.T."/>
        </authorList>
    </citation>
    <scope>NUCLEOTIDE SEQUENCE [GENOMIC DNA]</scope>
    <source>
        <strain>ATCC 23279 / DSM 20252 / BCRC 14062 / CIP 106144 / JCM 6125 / NBRC 100497 / NCDO 1674 / NCIMB 11648 / NRRL B-3472</strain>
    </source>
</reference>
<feature type="chain" id="PRO_0000067771" description="DNA-directed RNA polymerase subunit beta'">
    <location>
        <begin position="1" status="less than"/>
        <end position="1004" status="greater than"/>
    </location>
</feature>
<feature type="binding site" evidence="1">
    <location>
        <position position="388"/>
    </location>
    <ligand>
        <name>Mg(2+)</name>
        <dbReference type="ChEBI" id="CHEBI:18420"/>
    </ligand>
</feature>
<feature type="binding site" evidence="1">
    <location>
        <position position="390"/>
    </location>
    <ligand>
        <name>Mg(2+)</name>
        <dbReference type="ChEBI" id="CHEBI:18420"/>
    </ligand>
</feature>
<feature type="binding site" evidence="1">
    <location>
        <position position="392"/>
    </location>
    <ligand>
        <name>Mg(2+)</name>
        <dbReference type="ChEBI" id="CHEBI:18420"/>
    </ligand>
</feature>
<feature type="binding site" evidence="1">
    <location>
        <position position="757"/>
    </location>
    <ligand>
        <name>Zn(2+)</name>
        <dbReference type="ChEBI" id="CHEBI:29105"/>
    </ligand>
</feature>
<feature type="binding site" evidence="1">
    <location>
        <position position="831"/>
    </location>
    <ligand>
        <name>Zn(2+)</name>
        <dbReference type="ChEBI" id="CHEBI:29105"/>
    </ligand>
</feature>
<feature type="binding site" evidence="1">
    <location>
        <position position="838"/>
    </location>
    <ligand>
        <name>Zn(2+)</name>
        <dbReference type="ChEBI" id="CHEBI:29105"/>
    </ligand>
</feature>
<feature type="binding site" evidence="1">
    <location>
        <position position="841"/>
    </location>
    <ligand>
        <name>Zn(2+)</name>
        <dbReference type="ChEBI" id="CHEBI:29105"/>
    </ligand>
</feature>
<feature type="non-terminal residue">
    <location>
        <position position="1"/>
    </location>
</feature>
<feature type="non-terminal residue">
    <location>
        <position position="1004"/>
    </location>
</feature>
<gene>
    <name evidence="1" type="primary">rpoC</name>
</gene>
<keyword id="KW-0240">DNA-directed RNA polymerase</keyword>
<keyword id="KW-0460">Magnesium</keyword>
<keyword id="KW-0479">Metal-binding</keyword>
<keyword id="KW-0548">Nucleotidyltransferase</keyword>
<keyword id="KW-0804">Transcription</keyword>
<keyword id="KW-0808">Transferase</keyword>
<keyword id="KW-0862">Zinc</keyword>
<sequence length="1004" mass="111965">RIRYKGIVCDRCGVEVTSSKVRRERMGHIELAAPVTHIWYFKGIPSRMGLILDMSPRSLEEIIYFASYVVINPGNTPLEKKQLITEAEYRQYQDQYGTDTFDAKMGAEAIKELLAEVDLEKHAKELKNELKDATGQKRTRAVRRLDIVEAFIQSGNKPEWMVMDVVPVIPPDLRPMVQLEGGRFATSDLNDLYRRVINRNNRLKRLLDLNAPGIIVQNEKRMLQEAVDALIDNGRRGRPVSGPGNRPLKSLSHLLKGKQGRFRQNLLGKRVDYSGRSVIDVGPFLKMNQMGLPRQMAVELFKPFIYNRLIELGTENGGANNLRSARRLVERHEDVVQDVLEEVVKEHPVLLNRAPTLHRLGIQAFEPVLVSGKAMRLHPLVTTAYNADFDGDQMAIHVPLSDEAQAEARLLMLAASHILAPKDGKPIVAPSQDMTIGNYYLTTEEAGIKGEGMIFSSADEVKMALQNHEVELHTRIGIAASSFDKAKPFTDHQRARIMVTTVGKVIFNEILPDDFPYINEPKSENFNGIDGRFFLDPGTDIVGWFKNESLNGPFKSGFLSDIIAQIYARYQVTRTSVLLDDMKDLGYNISTRSGLTVRMSDVTELPEKGEVLKEAHEKVAKITKQFRRGLLTDDERYIQVTQTWSDAQDKIKSMLIASFDSKNPIFMMSDSGARGNISNSFQLAGMRGLMAAPNGKVIELPVTANFREGLCVLEMFISTHGARKGMTDTALKTANSGYLTRRLVDVAQEVIVREEDCGTDRGLDVSAIMDGNEVIEPLYDRILGRYAMKPVIDPKTGEVIAKKNQMIDEHVADQIIDAGIQTVTIRSIFTCRTEHGVCVKCYGRNMATGDIVEVGEAVGTVAAQSIGEPGTQLTMRTFHTGGVALSEDITQGLPRVQEIFEARNPKGRAEISEVTGKVTSIEENPADRTKTVTIEGETDTREYVLPISARLRVAEGDEIHRSEAINEGPLDPKELIKVSSTLKTENYMLAEVRKVYRMQGVGIA</sequence>
<comment type="function">
    <text evidence="1">DNA-dependent RNA polymerase catalyzes the transcription of DNA into RNA using the four ribonucleoside triphosphates as substrates.</text>
</comment>
<comment type="catalytic activity">
    <reaction evidence="1">
        <text>RNA(n) + a ribonucleoside 5'-triphosphate = RNA(n+1) + diphosphate</text>
        <dbReference type="Rhea" id="RHEA:21248"/>
        <dbReference type="Rhea" id="RHEA-COMP:14527"/>
        <dbReference type="Rhea" id="RHEA-COMP:17342"/>
        <dbReference type="ChEBI" id="CHEBI:33019"/>
        <dbReference type="ChEBI" id="CHEBI:61557"/>
        <dbReference type="ChEBI" id="CHEBI:140395"/>
        <dbReference type="EC" id="2.7.7.6"/>
    </reaction>
</comment>
<comment type="cofactor">
    <cofactor evidence="1">
        <name>Mg(2+)</name>
        <dbReference type="ChEBI" id="CHEBI:18420"/>
    </cofactor>
    <text evidence="1">Binds 1 Mg(2+) ion per subunit.</text>
</comment>
<comment type="cofactor">
    <cofactor evidence="1">
        <name>Zn(2+)</name>
        <dbReference type="ChEBI" id="CHEBI:29105"/>
    </cofactor>
    <text evidence="1">Binds 1 Zn(2+) ion per subunit.</text>
</comment>
<comment type="subunit">
    <text evidence="1">The RNAP catalytic core consists of 2 alpha, 1 beta, 1 beta' and 1 omega subunit. When a sigma factor is associated with the core the holoenzyme is formed, which can initiate transcription.</text>
</comment>
<comment type="similarity">
    <text evidence="1 2">Belongs to the RNA polymerase beta' chain family.</text>
</comment>
<accession>P95405</accession>
<protein>
    <recommendedName>
        <fullName evidence="1">DNA-directed RNA polymerase subunit beta'</fullName>
        <shortName evidence="1">RNAP subunit beta'</shortName>
        <ecNumber evidence="1">2.7.7.6</ecNumber>
    </recommendedName>
    <alternativeName>
        <fullName evidence="1">RNA polymerase subunit beta'</fullName>
    </alternativeName>
    <alternativeName>
        <fullName evidence="1">Transcriptase subunit beta'</fullName>
    </alternativeName>
</protein>
<dbReference type="EC" id="2.7.7.6" evidence="1"/>
<dbReference type="EMBL" id="X96384">
    <property type="protein sequence ID" value="CAA65248.1"/>
    <property type="molecule type" value="Genomic_DNA"/>
</dbReference>
<dbReference type="SMR" id="P95405"/>
<dbReference type="GO" id="GO:0000428">
    <property type="term" value="C:DNA-directed RNA polymerase complex"/>
    <property type="evidence" value="ECO:0007669"/>
    <property type="project" value="UniProtKB-KW"/>
</dbReference>
<dbReference type="GO" id="GO:0003677">
    <property type="term" value="F:DNA binding"/>
    <property type="evidence" value="ECO:0007669"/>
    <property type="project" value="InterPro"/>
</dbReference>
<dbReference type="GO" id="GO:0003899">
    <property type="term" value="F:DNA-directed RNA polymerase activity"/>
    <property type="evidence" value="ECO:0007669"/>
    <property type="project" value="UniProtKB-EC"/>
</dbReference>
<dbReference type="GO" id="GO:0046872">
    <property type="term" value="F:metal ion binding"/>
    <property type="evidence" value="ECO:0007669"/>
    <property type="project" value="UniProtKB-KW"/>
</dbReference>
<dbReference type="GO" id="GO:0006351">
    <property type="term" value="P:DNA-templated transcription"/>
    <property type="evidence" value="ECO:0007669"/>
    <property type="project" value="InterPro"/>
</dbReference>
<dbReference type="CDD" id="cd01609">
    <property type="entry name" value="RNAP_beta'_N"/>
    <property type="match status" value="1"/>
</dbReference>
<dbReference type="Gene3D" id="1.10.132.30">
    <property type="match status" value="1"/>
</dbReference>
<dbReference type="Gene3D" id="1.10.1790.20">
    <property type="match status" value="1"/>
</dbReference>
<dbReference type="Gene3D" id="1.10.40.90">
    <property type="match status" value="1"/>
</dbReference>
<dbReference type="Gene3D" id="2.40.40.20">
    <property type="match status" value="1"/>
</dbReference>
<dbReference type="Gene3D" id="2.40.50.100">
    <property type="match status" value="1"/>
</dbReference>
<dbReference type="Gene3D" id="4.10.860.120">
    <property type="entry name" value="RNA polymerase II, clamp domain"/>
    <property type="match status" value="1"/>
</dbReference>
<dbReference type="Gene3D" id="1.10.274.100">
    <property type="entry name" value="RNA polymerase Rpb1, domain 3"/>
    <property type="match status" value="1"/>
</dbReference>
<dbReference type="HAMAP" id="MF_01322">
    <property type="entry name" value="RNApol_bact_RpoC"/>
    <property type="match status" value="1"/>
</dbReference>
<dbReference type="InterPro" id="IPR045867">
    <property type="entry name" value="DNA-dir_RpoC_beta_prime"/>
</dbReference>
<dbReference type="InterPro" id="IPR012754">
    <property type="entry name" value="DNA-dir_RpoC_beta_prime_bact"/>
</dbReference>
<dbReference type="InterPro" id="IPR000722">
    <property type="entry name" value="RNA_pol_asu"/>
</dbReference>
<dbReference type="InterPro" id="IPR006592">
    <property type="entry name" value="RNA_pol_N"/>
</dbReference>
<dbReference type="InterPro" id="IPR007080">
    <property type="entry name" value="RNA_pol_Rpb1_1"/>
</dbReference>
<dbReference type="InterPro" id="IPR007066">
    <property type="entry name" value="RNA_pol_Rpb1_3"/>
</dbReference>
<dbReference type="InterPro" id="IPR042102">
    <property type="entry name" value="RNA_pol_Rpb1_3_sf"/>
</dbReference>
<dbReference type="InterPro" id="IPR007083">
    <property type="entry name" value="RNA_pol_Rpb1_4"/>
</dbReference>
<dbReference type="InterPro" id="IPR007081">
    <property type="entry name" value="RNA_pol_Rpb1_5"/>
</dbReference>
<dbReference type="InterPro" id="IPR044893">
    <property type="entry name" value="RNA_pol_Rpb1_clamp_domain"/>
</dbReference>
<dbReference type="InterPro" id="IPR038120">
    <property type="entry name" value="Rpb1_funnel_sf"/>
</dbReference>
<dbReference type="NCBIfam" id="TIGR02386">
    <property type="entry name" value="rpoC_TIGR"/>
    <property type="match status" value="1"/>
</dbReference>
<dbReference type="PANTHER" id="PTHR19376">
    <property type="entry name" value="DNA-DIRECTED RNA POLYMERASE"/>
    <property type="match status" value="1"/>
</dbReference>
<dbReference type="PANTHER" id="PTHR19376:SF54">
    <property type="entry name" value="DNA-DIRECTED RNA POLYMERASE SUBUNIT BETA"/>
    <property type="match status" value="1"/>
</dbReference>
<dbReference type="Pfam" id="PF04997">
    <property type="entry name" value="RNA_pol_Rpb1_1"/>
    <property type="match status" value="1"/>
</dbReference>
<dbReference type="Pfam" id="PF00623">
    <property type="entry name" value="RNA_pol_Rpb1_2"/>
    <property type="match status" value="1"/>
</dbReference>
<dbReference type="Pfam" id="PF04983">
    <property type="entry name" value="RNA_pol_Rpb1_3"/>
    <property type="match status" value="1"/>
</dbReference>
<dbReference type="Pfam" id="PF05000">
    <property type="entry name" value="RNA_pol_Rpb1_4"/>
    <property type="match status" value="1"/>
</dbReference>
<dbReference type="Pfam" id="PF04998">
    <property type="entry name" value="RNA_pol_Rpb1_5"/>
    <property type="match status" value="1"/>
</dbReference>
<dbReference type="SMART" id="SM00663">
    <property type="entry name" value="RPOLA_N"/>
    <property type="match status" value="1"/>
</dbReference>
<dbReference type="SUPFAM" id="SSF64484">
    <property type="entry name" value="beta and beta-prime subunits of DNA dependent RNA-polymerase"/>
    <property type="match status" value="1"/>
</dbReference>